<sequence length="519" mass="55955">MQPIQRALISVSDKTGLLDFARVLAARGVEILSTGGTARLLADNGLTVVEVSDHTGFPEMMDGRVKTLHPRIHGGILGRRGLDDAVMTEHGIPPIDLVVVNLYPFEQTVANPDCDLETAIENIDIGGPTLLRAAAKNHASVTVVVDAADYERVAEEIQSSGGVSEATRFDLAAKVFEHTARYDGAIANYLSARAESEAGASFPRTLTLQFKRRQSMRYGENPHQNAAFYVEHQVAEAGISTATQIQGKELSYNNIADTDAALECVKQFDEAPACVIVKHANPCGVAFGATLLEAYDRAYQTDPESAFGGIIAFNRELDAETAHAIVERQFVEVIIAPRVSDAARAAVASKPNVRLLECGDWSREPGDRLDFKRVNGGLLVQDADLRLTDQIRTVTERTPTEAELADLLFTWRVAKFVKSNAIVYGRERMTIGVGAGQMSRVNSARIAAIKAEHAGLTVAGSVMASDAFFPFRDGIDQAAAAGIKAVIQPGGSMRDAEVIAAANEHGMAMVFTGMRHFRH</sequence>
<accession>Q46480</accession>
<accession>D3RQG4</accession>
<keyword id="KW-0378">Hydrolase</keyword>
<keyword id="KW-0511">Multifunctional enzyme</keyword>
<keyword id="KW-0658">Purine biosynthesis</keyword>
<keyword id="KW-1185">Reference proteome</keyword>
<keyword id="KW-0808">Transferase</keyword>
<feature type="chain" id="PRO_0000192083" description="Bifunctional purine biosynthesis protein PurH">
    <location>
        <begin position="1"/>
        <end position="519"/>
    </location>
</feature>
<feature type="domain" description="MGS-like" evidence="2">
    <location>
        <begin position="1"/>
        <end position="145"/>
    </location>
</feature>
<proteinExistence type="inferred from homology"/>
<name>PUR9_ALLVD</name>
<protein>
    <recommendedName>
        <fullName evidence="1">Bifunctional purine biosynthesis protein PurH</fullName>
    </recommendedName>
    <domain>
        <recommendedName>
            <fullName evidence="1">Phosphoribosylaminoimidazolecarboxamide formyltransferase</fullName>
            <ecNumber evidence="1">2.1.2.3</ecNumber>
        </recommendedName>
        <alternativeName>
            <fullName evidence="1">AICAR transformylase</fullName>
        </alternativeName>
    </domain>
    <domain>
        <recommendedName>
            <fullName evidence="1">IMP cyclohydrolase</fullName>
            <ecNumber evidence="1">3.5.4.10</ecNumber>
        </recommendedName>
        <alternativeName>
            <fullName evidence="1">ATIC</fullName>
        </alternativeName>
        <alternativeName>
            <fullName evidence="1">IMP synthase</fullName>
        </alternativeName>
        <alternativeName>
            <fullName evidence="1">Inosinicase</fullName>
        </alternativeName>
    </domain>
</protein>
<evidence type="ECO:0000255" key="1">
    <source>
        <dbReference type="HAMAP-Rule" id="MF_00139"/>
    </source>
</evidence>
<evidence type="ECO:0000255" key="2">
    <source>
        <dbReference type="PROSITE-ProRule" id="PRU01202"/>
    </source>
</evidence>
<evidence type="ECO:0000305" key="3"/>
<dbReference type="EC" id="2.1.2.3" evidence="1"/>
<dbReference type="EC" id="3.5.4.10" evidence="1"/>
<dbReference type="EMBL" id="CP001896">
    <property type="protein sequence ID" value="ADC61769.1"/>
    <property type="molecule type" value="Genomic_DNA"/>
</dbReference>
<dbReference type="EMBL" id="L76417">
    <property type="protein sequence ID" value="AAB02978.1"/>
    <property type="molecule type" value="Genomic_DNA"/>
</dbReference>
<dbReference type="RefSeq" id="WP_012970045.1">
    <property type="nucleotide sequence ID" value="NC_013851.1"/>
</dbReference>
<dbReference type="SMR" id="Q46480"/>
<dbReference type="STRING" id="572477.Alvin_0822"/>
<dbReference type="KEGG" id="alv:Alvin_0822"/>
<dbReference type="eggNOG" id="COG0138">
    <property type="taxonomic scope" value="Bacteria"/>
</dbReference>
<dbReference type="HOGENOM" id="CLU_016316_5_2_6"/>
<dbReference type="OrthoDB" id="9802065at2"/>
<dbReference type="UniPathway" id="UPA00074">
    <property type="reaction ID" value="UER00133"/>
</dbReference>
<dbReference type="UniPathway" id="UPA00074">
    <property type="reaction ID" value="UER00135"/>
</dbReference>
<dbReference type="Proteomes" id="UP000001441">
    <property type="component" value="Chromosome"/>
</dbReference>
<dbReference type="GO" id="GO:0005829">
    <property type="term" value="C:cytosol"/>
    <property type="evidence" value="ECO:0007669"/>
    <property type="project" value="TreeGrafter"/>
</dbReference>
<dbReference type="GO" id="GO:0003937">
    <property type="term" value="F:IMP cyclohydrolase activity"/>
    <property type="evidence" value="ECO:0007669"/>
    <property type="project" value="UniProtKB-UniRule"/>
</dbReference>
<dbReference type="GO" id="GO:0004643">
    <property type="term" value="F:phosphoribosylaminoimidazolecarboxamide formyltransferase activity"/>
    <property type="evidence" value="ECO:0007669"/>
    <property type="project" value="UniProtKB-UniRule"/>
</dbReference>
<dbReference type="GO" id="GO:0006189">
    <property type="term" value="P:'de novo' IMP biosynthetic process"/>
    <property type="evidence" value="ECO:0007669"/>
    <property type="project" value="UniProtKB-UniRule"/>
</dbReference>
<dbReference type="CDD" id="cd01421">
    <property type="entry name" value="IMPCH"/>
    <property type="match status" value="1"/>
</dbReference>
<dbReference type="FunFam" id="3.40.140.20:FF:000001">
    <property type="entry name" value="Bifunctional purine biosynthesis protein PurH"/>
    <property type="match status" value="1"/>
</dbReference>
<dbReference type="FunFam" id="3.40.140.20:FF:000002">
    <property type="entry name" value="Bifunctional purine biosynthesis protein PurH"/>
    <property type="match status" value="1"/>
</dbReference>
<dbReference type="FunFam" id="3.40.50.1380:FF:000001">
    <property type="entry name" value="Bifunctional purine biosynthesis protein PurH"/>
    <property type="match status" value="1"/>
</dbReference>
<dbReference type="Gene3D" id="3.40.140.20">
    <property type="match status" value="2"/>
</dbReference>
<dbReference type="Gene3D" id="3.40.50.1380">
    <property type="entry name" value="Methylglyoxal synthase-like domain"/>
    <property type="match status" value="1"/>
</dbReference>
<dbReference type="HAMAP" id="MF_00139">
    <property type="entry name" value="PurH"/>
    <property type="match status" value="1"/>
</dbReference>
<dbReference type="InterPro" id="IPR024051">
    <property type="entry name" value="AICAR_Tfase_dup_dom_sf"/>
</dbReference>
<dbReference type="InterPro" id="IPR016193">
    <property type="entry name" value="Cytidine_deaminase-like"/>
</dbReference>
<dbReference type="InterPro" id="IPR011607">
    <property type="entry name" value="MGS-like_dom"/>
</dbReference>
<dbReference type="InterPro" id="IPR036914">
    <property type="entry name" value="MGS-like_dom_sf"/>
</dbReference>
<dbReference type="InterPro" id="IPR002695">
    <property type="entry name" value="PurH-like"/>
</dbReference>
<dbReference type="NCBIfam" id="NF002049">
    <property type="entry name" value="PRK00881.1"/>
    <property type="match status" value="1"/>
</dbReference>
<dbReference type="NCBIfam" id="TIGR00355">
    <property type="entry name" value="purH"/>
    <property type="match status" value="1"/>
</dbReference>
<dbReference type="PANTHER" id="PTHR11692:SF0">
    <property type="entry name" value="BIFUNCTIONAL PURINE BIOSYNTHESIS PROTEIN ATIC"/>
    <property type="match status" value="1"/>
</dbReference>
<dbReference type="PANTHER" id="PTHR11692">
    <property type="entry name" value="BIFUNCTIONAL PURINE BIOSYNTHESIS PROTEIN PURH"/>
    <property type="match status" value="1"/>
</dbReference>
<dbReference type="Pfam" id="PF01808">
    <property type="entry name" value="AICARFT_IMPCHas"/>
    <property type="match status" value="1"/>
</dbReference>
<dbReference type="Pfam" id="PF02142">
    <property type="entry name" value="MGS"/>
    <property type="match status" value="1"/>
</dbReference>
<dbReference type="PIRSF" id="PIRSF000414">
    <property type="entry name" value="AICARFT_IMPCHas"/>
    <property type="match status" value="1"/>
</dbReference>
<dbReference type="SMART" id="SM00798">
    <property type="entry name" value="AICARFT_IMPCHas"/>
    <property type="match status" value="1"/>
</dbReference>
<dbReference type="SMART" id="SM00851">
    <property type="entry name" value="MGS"/>
    <property type="match status" value="1"/>
</dbReference>
<dbReference type="SUPFAM" id="SSF53927">
    <property type="entry name" value="Cytidine deaminase-like"/>
    <property type="match status" value="1"/>
</dbReference>
<dbReference type="SUPFAM" id="SSF52335">
    <property type="entry name" value="Methylglyoxal synthase-like"/>
    <property type="match status" value="1"/>
</dbReference>
<dbReference type="PROSITE" id="PS51855">
    <property type="entry name" value="MGS"/>
    <property type="match status" value="1"/>
</dbReference>
<reference key="1">
    <citation type="journal article" date="2011" name="Stand. Genomic Sci.">
        <title>Complete genome sequence of Allochromatium vinosum DSM 180(T).</title>
        <authorList>
            <person name="Weissgerber T."/>
            <person name="Zigann R."/>
            <person name="Bruce D."/>
            <person name="Chang Y.J."/>
            <person name="Detter J.C."/>
            <person name="Han C."/>
            <person name="Hauser L."/>
            <person name="Jeffries C.D."/>
            <person name="Land M."/>
            <person name="Munk A.C."/>
            <person name="Tapia R."/>
            <person name="Dahl C."/>
        </authorList>
    </citation>
    <scope>NUCLEOTIDE SEQUENCE [LARGE SCALE GENOMIC DNA]</scope>
    <source>
        <strain>ATCC 17899 / DSM 180 / NBRC 103801 / NCIMB 10441 / D</strain>
    </source>
</reference>
<reference key="2">
    <citation type="submission" date="1996-04" db="EMBL/GenBank/DDBJ databases">
        <authorList>
            <person name="Chen Y.L."/>
            <person name="Knaff D.B."/>
        </authorList>
    </citation>
    <scope>NUCLEOTIDE SEQUENCE [GENOMIC DNA] OF 442-519</scope>
</reference>
<comment type="catalytic activity">
    <reaction evidence="1">
        <text>(6R)-10-formyltetrahydrofolate + 5-amino-1-(5-phospho-beta-D-ribosyl)imidazole-4-carboxamide = 5-formamido-1-(5-phospho-D-ribosyl)imidazole-4-carboxamide + (6S)-5,6,7,8-tetrahydrofolate</text>
        <dbReference type="Rhea" id="RHEA:22192"/>
        <dbReference type="ChEBI" id="CHEBI:57453"/>
        <dbReference type="ChEBI" id="CHEBI:58467"/>
        <dbReference type="ChEBI" id="CHEBI:58475"/>
        <dbReference type="ChEBI" id="CHEBI:195366"/>
        <dbReference type="EC" id="2.1.2.3"/>
    </reaction>
</comment>
<comment type="catalytic activity">
    <reaction evidence="1">
        <text>IMP + H2O = 5-formamido-1-(5-phospho-D-ribosyl)imidazole-4-carboxamide</text>
        <dbReference type="Rhea" id="RHEA:18445"/>
        <dbReference type="ChEBI" id="CHEBI:15377"/>
        <dbReference type="ChEBI" id="CHEBI:58053"/>
        <dbReference type="ChEBI" id="CHEBI:58467"/>
        <dbReference type="EC" id="3.5.4.10"/>
    </reaction>
</comment>
<comment type="pathway">
    <text evidence="1">Purine metabolism; IMP biosynthesis via de novo pathway; 5-formamido-1-(5-phospho-D-ribosyl)imidazole-4-carboxamide from 5-amino-1-(5-phospho-D-ribosyl)imidazole-4-carboxamide (10-formyl THF route): step 1/1.</text>
</comment>
<comment type="pathway">
    <text evidence="1">Purine metabolism; IMP biosynthesis via de novo pathway; IMP from 5-formamido-1-(5-phospho-D-ribosyl)imidazole-4-carboxamide: step 1/1.</text>
</comment>
<comment type="domain">
    <text evidence="1">The IMP cyclohydrolase activity resides in the N-terminal region.</text>
</comment>
<comment type="similarity">
    <text evidence="1 3">Belongs to the PurH family.</text>
</comment>
<organism>
    <name type="scientific">Allochromatium vinosum (strain ATCC 17899 / DSM 180 / NBRC 103801 / NCIMB 10441 / D)</name>
    <name type="common">Chromatium vinosum</name>
    <dbReference type="NCBI Taxonomy" id="572477"/>
    <lineage>
        <taxon>Bacteria</taxon>
        <taxon>Pseudomonadati</taxon>
        <taxon>Pseudomonadota</taxon>
        <taxon>Gammaproteobacteria</taxon>
        <taxon>Chromatiales</taxon>
        <taxon>Chromatiaceae</taxon>
        <taxon>Allochromatium</taxon>
    </lineage>
</organism>
<gene>
    <name evidence="1" type="primary">purH</name>
    <name type="ordered locus">Alvin_0822</name>
</gene>